<gene>
    <name evidence="1" type="primary">ecfA</name>
    <name type="synonym">cbiO</name>
    <name type="ordered locus">MJ1088</name>
</gene>
<keyword id="KW-0067">ATP-binding</keyword>
<keyword id="KW-1003">Cell membrane</keyword>
<keyword id="KW-0472">Membrane</keyword>
<keyword id="KW-0547">Nucleotide-binding</keyword>
<keyword id="KW-1185">Reference proteome</keyword>
<keyword id="KW-1278">Translocase</keyword>
<keyword id="KW-0813">Transport</keyword>
<dbReference type="EC" id="7.-.-.-" evidence="1"/>
<dbReference type="EMBL" id="L77117">
    <property type="protein sequence ID" value="AAB99089.1"/>
    <property type="molecule type" value="Genomic_DNA"/>
</dbReference>
<dbReference type="PIR" id="G64435">
    <property type="entry name" value="G64435"/>
</dbReference>
<dbReference type="RefSeq" id="WP_010870600.1">
    <property type="nucleotide sequence ID" value="NC_000909.1"/>
</dbReference>
<dbReference type="SMR" id="Q58488"/>
<dbReference type="FunCoup" id="Q58488">
    <property type="interactions" value="63"/>
</dbReference>
<dbReference type="STRING" id="243232.MJ_1088"/>
<dbReference type="PaxDb" id="243232-MJ_1088"/>
<dbReference type="EnsemblBacteria" id="AAB99089">
    <property type="protein sequence ID" value="AAB99089"/>
    <property type="gene ID" value="MJ_1088"/>
</dbReference>
<dbReference type="GeneID" id="1451984"/>
<dbReference type="KEGG" id="mja:MJ_1088"/>
<dbReference type="eggNOG" id="arCOG00202">
    <property type="taxonomic scope" value="Archaea"/>
</dbReference>
<dbReference type="HOGENOM" id="CLU_000604_1_22_2"/>
<dbReference type="InParanoid" id="Q58488"/>
<dbReference type="OrthoDB" id="18209at2157"/>
<dbReference type="PhylomeDB" id="Q58488"/>
<dbReference type="Proteomes" id="UP000000805">
    <property type="component" value="Chromosome"/>
</dbReference>
<dbReference type="GO" id="GO:0043190">
    <property type="term" value="C:ATP-binding cassette (ABC) transporter complex"/>
    <property type="evidence" value="ECO:0000318"/>
    <property type="project" value="GO_Central"/>
</dbReference>
<dbReference type="GO" id="GO:0005524">
    <property type="term" value="F:ATP binding"/>
    <property type="evidence" value="ECO:0000318"/>
    <property type="project" value="GO_Central"/>
</dbReference>
<dbReference type="GO" id="GO:0016887">
    <property type="term" value="F:ATP hydrolysis activity"/>
    <property type="evidence" value="ECO:0007669"/>
    <property type="project" value="InterPro"/>
</dbReference>
<dbReference type="GO" id="GO:0042626">
    <property type="term" value="F:ATPase-coupled transmembrane transporter activity"/>
    <property type="evidence" value="ECO:0000318"/>
    <property type="project" value="GO_Central"/>
</dbReference>
<dbReference type="GO" id="GO:0006824">
    <property type="term" value="P:cobalt ion transport"/>
    <property type="evidence" value="ECO:0007669"/>
    <property type="project" value="InterPro"/>
</dbReference>
<dbReference type="CDD" id="cd03225">
    <property type="entry name" value="ABC_cobalt_CbiO_domain1"/>
    <property type="match status" value="1"/>
</dbReference>
<dbReference type="FunFam" id="3.40.50.300:FF:000224">
    <property type="entry name" value="Energy-coupling factor transporter ATP-binding protein EcfA"/>
    <property type="match status" value="1"/>
</dbReference>
<dbReference type="Gene3D" id="3.40.50.300">
    <property type="entry name" value="P-loop containing nucleotide triphosphate hydrolases"/>
    <property type="match status" value="1"/>
</dbReference>
<dbReference type="InterPro" id="IPR003593">
    <property type="entry name" value="AAA+_ATPase"/>
</dbReference>
<dbReference type="InterPro" id="IPR003439">
    <property type="entry name" value="ABC_transporter-like_ATP-bd"/>
</dbReference>
<dbReference type="InterPro" id="IPR017871">
    <property type="entry name" value="ABC_transporter-like_CS"/>
</dbReference>
<dbReference type="InterPro" id="IPR015856">
    <property type="entry name" value="ABC_transpr_CbiO/EcfA_su"/>
</dbReference>
<dbReference type="InterPro" id="IPR005876">
    <property type="entry name" value="Co_trans_ATP-bd"/>
</dbReference>
<dbReference type="InterPro" id="IPR050095">
    <property type="entry name" value="ECF_ABC_transporter_ATP-bd"/>
</dbReference>
<dbReference type="InterPro" id="IPR027417">
    <property type="entry name" value="P-loop_NTPase"/>
</dbReference>
<dbReference type="NCBIfam" id="TIGR01166">
    <property type="entry name" value="cbiO"/>
    <property type="match status" value="1"/>
</dbReference>
<dbReference type="PANTHER" id="PTHR43553:SF24">
    <property type="entry name" value="ENERGY-COUPLING FACTOR TRANSPORTER ATP-BINDING PROTEIN ECFA1"/>
    <property type="match status" value="1"/>
</dbReference>
<dbReference type="PANTHER" id="PTHR43553">
    <property type="entry name" value="HEAVY METAL TRANSPORTER"/>
    <property type="match status" value="1"/>
</dbReference>
<dbReference type="Pfam" id="PF00005">
    <property type="entry name" value="ABC_tran"/>
    <property type="match status" value="1"/>
</dbReference>
<dbReference type="SMART" id="SM00382">
    <property type="entry name" value="AAA"/>
    <property type="match status" value="1"/>
</dbReference>
<dbReference type="SUPFAM" id="SSF52540">
    <property type="entry name" value="P-loop containing nucleoside triphosphate hydrolases"/>
    <property type="match status" value="1"/>
</dbReference>
<dbReference type="PROSITE" id="PS00211">
    <property type="entry name" value="ABC_TRANSPORTER_1"/>
    <property type="match status" value="1"/>
</dbReference>
<dbReference type="PROSITE" id="PS50893">
    <property type="entry name" value="ABC_TRANSPORTER_2"/>
    <property type="match status" value="1"/>
</dbReference>
<dbReference type="PROSITE" id="PS51246">
    <property type="entry name" value="CBIO"/>
    <property type="match status" value="1"/>
</dbReference>
<organism>
    <name type="scientific">Methanocaldococcus jannaschii (strain ATCC 43067 / DSM 2661 / JAL-1 / JCM 10045 / NBRC 100440)</name>
    <name type="common">Methanococcus jannaschii</name>
    <dbReference type="NCBI Taxonomy" id="243232"/>
    <lineage>
        <taxon>Archaea</taxon>
        <taxon>Methanobacteriati</taxon>
        <taxon>Methanobacteriota</taxon>
        <taxon>Methanomada group</taxon>
        <taxon>Methanococci</taxon>
        <taxon>Methanococcales</taxon>
        <taxon>Methanocaldococcaceae</taxon>
        <taxon>Methanocaldococcus</taxon>
    </lineage>
</organism>
<reference key="1">
    <citation type="journal article" date="1996" name="Science">
        <title>Complete genome sequence of the methanogenic archaeon, Methanococcus jannaschii.</title>
        <authorList>
            <person name="Bult C.J."/>
            <person name="White O."/>
            <person name="Olsen G.J."/>
            <person name="Zhou L."/>
            <person name="Fleischmann R.D."/>
            <person name="Sutton G.G."/>
            <person name="Blake J.A."/>
            <person name="FitzGerald L.M."/>
            <person name="Clayton R.A."/>
            <person name="Gocayne J.D."/>
            <person name="Kerlavage A.R."/>
            <person name="Dougherty B.A."/>
            <person name="Tomb J.-F."/>
            <person name="Adams M.D."/>
            <person name="Reich C.I."/>
            <person name="Overbeek R."/>
            <person name="Kirkness E.F."/>
            <person name="Weinstock K.G."/>
            <person name="Merrick J.M."/>
            <person name="Glodek A."/>
            <person name="Scott J.L."/>
            <person name="Geoghagen N.S.M."/>
            <person name="Weidman J.F."/>
            <person name="Fuhrmann J.L."/>
            <person name="Nguyen D."/>
            <person name="Utterback T.R."/>
            <person name="Kelley J.M."/>
            <person name="Peterson J.D."/>
            <person name="Sadow P.W."/>
            <person name="Hanna M.C."/>
            <person name="Cotton M.D."/>
            <person name="Roberts K.M."/>
            <person name="Hurst M.A."/>
            <person name="Kaine B.P."/>
            <person name="Borodovsky M."/>
            <person name="Klenk H.-P."/>
            <person name="Fraser C.M."/>
            <person name="Smith H.O."/>
            <person name="Woese C.R."/>
            <person name="Venter J.C."/>
        </authorList>
    </citation>
    <scope>NUCLEOTIDE SEQUENCE [LARGE SCALE GENOMIC DNA]</scope>
    <source>
        <strain>ATCC 43067 / DSM 2661 / JAL-1 / JCM 10045 / NBRC 100440</strain>
    </source>
</reference>
<comment type="function">
    <text evidence="1">ATP-binding (A) component of a common energy-coupling factor (ECF) ABC-transporter complex. Unlike classic ABC transporters this ECF transporter provides the energy necessary to transport a number of different substrates.</text>
</comment>
<comment type="subunit">
    <text evidence="1">Forms a stable energy-coupling factor (ECF) transporter complex composed of 2 membrane-embedded substrate-binding proteins (S component), 2 ATP-binding proteins (A component) and 2 transmembrane proteins (T component).</text>
</comment>
<comment type="subcellular location">
    <subcellularLocation>
        <location evidence="1">Cell membrane</location>
        <topology evidence="1">Peripheral membrane protein</topology>
    </subcellularLocation>
</comment>
<comment type="similarity">
    <text evidence="1">Belongs to the ABC transporter superfamily. Energy-coupling factor EcfA family.</text>
</comment>
<protein>
    <recommendedName>
        <fullName evidence="1">Energy-coupling factor transporter ATP-binding protein EcfA</fullName>
        <shortName evidence="1">ECF transporter A component EcfA</shortName>
        <ecNumber evidence="1">7.-.-.-</ecNumber>
    </recommendedName>
</protein>
<sequence>MYIVETKDLYFRYPDGTAVLKGINFKVKKGEMVSLLGPNGAGKSTLFLHFNGILRPTKGEVLIKGKPIKYDKKSLVEVRKTVGLVFQNPDDQIFAPTVKEDVAFGPLNLGLPKEEVEKRVKEALKAVGMEGFENKPPHHLSGGQKKRVAIAGILAMQPEVIVLDEPTAGLDPVGASKIMKLLYDLNKKGMTIIISTHDVDLVPVYADKVYVMYDGKILKEGTPKEVFSDVETIRKANLRLPRVAHLIEILNKKDNIPIEWGFTIGEVRRNIVNYLKEKC</sequence>
<evidence type="ECO:0000255" key="1">
    <source>
        <dbReference type="HAMAP-Rule" id="MF_01710"/>
    </source>
</evidence>
<proteinExistence type="inferred from homology"/>
<feature type="chain" id="PRO_0000092141" description="Energy-coupling factor transporter ATP-binding protein EcfA">
    <location>
        <begin position="1"/>
        <end position="279"/>
    </location>
</feature>
<feature type="domain" description="ABC transporter" evidence="1">
    <location>
        <begin position="4"/>
        <end position="239"/>
    </location>
</feature>
<feature type="binding site" evidence="1">
    <location>
        <begin position="37"/>
        <end position="44"/>
    </location>
    <ligand>
        <name>ATP</name>
        <dbReference type="ChEBI" id="CHEBI:30616"/>
    </ligand>
</feature>
<name>ECFA_METJA</name>
<accession>Q58488</accession>